<feature type="chain" id="PRO_0000458923" description="Micropeptide inhibiting actin cytoskeleton">
    <location>
        <begin position="1"/>
        <end position="51"/>
    </location>
</feature>
<feature type="region of interest" description="Disordered" evidence="1">
    <location>
        <begin position="1"/>
        <end position="22"/>
    </location>
</feature>
<keyword id="KW-0903">Direct protein sequencing</keyword>
<keyword id="KW-1185">Reference proteome</keyword>
<sequence>MERAGVPGFSPRRSSVEAKMQSTSCSVRKSSTVTAWPAVVLLLSWGQRRGG</sequence>
<dbReference type="EMBL" id="MN872799">
    <property type="protein sequence ID" value="QOI14795.1"/>
    <property type="molecule type" value="mRNA"/>
</dbReference>
<dbReference type="EMBL" id="AC025154">
    <property type="status" value="NOT_ANNOTATED_CDS"/>
    <property type="molecule type" value="Genomic_DNA"/>
</dbReference>
<dbReference type="AGR" id="HGNC:55474"/>
<dbReference type="GeneCards" id="AQP5-AS1"/>
<dbReference type="HGNC" id="HGNC:55474">
    <property type="gene designation" value="AQP5-AS1"/>
</dbReference>
<dbReference type="MalaCards" id="AQP5-AS1"/>
<dbReference type="PRO" id="PR:A0A7L8Y648"/>
<dbReference type="Proteomes" id="UP000005640">
    <property type="component" value="Unplaced"/>
</dbReference>
<dbReference type="GO" id="GO:0007015">
    <property type="term" value="P:actin filament organization"/>
    <property type="evidence" value="ECO:0000315"/>
    <property type="project" value="UniProtKB"/>
</dbReference>
<dbReference type="GO" id="GO:0042058">
    <property type="term" value="P:regulation of epidermal growth factor receptor signaling pathway"/>
    <property type="evidence" value="ECO:0000315"/>
    <property type="project" value="UniProtKB"/>
</dbReference>
<dbReference type="Pfam" id="PF23701">
    <property type="entry name" value="MIAC"/>
    <property type="match status" value="1"/>
</dbReference>
<organism evidence="6">
    <name type="scientific">Homo sapiens</name>
    <name type="common">Human</name>
    <dbReference type="NCBI Taxonomy" id="9606"/>
    <lineage>
        <taxon>Eukaryota</taxon>
        <taxon>Metazoa</taxon>
        <taxon>Chordata</taxon>
        <taxon>Craniata</taxon>
        <taxon>Vertebrata</taxon>
        <taxon>Euteleostomi</taxon>
        <taxon>Mammalia</taxon>
        <taxon>Eutheria</taxon>
        <taxon>Euarchontoglires</taxon>
        <taxon>Primates</taxon>
        <taxon>Haplorrhini</taxon>
        <taxon>Catarrhini</taxon>
        <taxon>Hominidae</taxon>
        <taxon>Homo</taxon>
    </lineage>
</organism>
<reference evidence="6" key="1">
    <citation type="journal article" date="2020" name="J. Am. Chem. Soc.">
        <title>Micropeptide MIAC Inhibits HNSCC Progression by Interacting with Aquaporin 2.</title>
        <authorList>
            <person name="Li M."/>
            <person name="Li X."/>
            <person name="Zhang Y."/>
            <person name="Wu H."/>
            <person name="Zhou H."/>
            <person name="Ding X."/>
            <person name="Zhang X."/>
            <person name="Jin X."/>
            <person name="Wang Y."/>
            <person name="Yin X."/>
            <person name="Li C."/>
            <person name="Yang P."/>
            <person name="Xu H."/>
        </authorList>
    </citation>
    <scope>NUCLEOTIDE SEQUENCE [MRNA]</scope>
    <scope>PROTEIN SEQUENCE OF 1-12</scope>
    <scope>FUNCTION</scope>
    <scope>INTERACTION WITH AQP2</scope>
    <scope>IDENTIFICATION BY MASS SPECTROMETRY</scope>
</reference>
<reference evidence="5" key="2">
    <citation type="journal article" date="2006" name="Nature">
        <title>The finished DNA sequence of human chromosome 12.</title>
        <authorList>
            <person name="Scherer S.E."/>
            <person name="Muzny D.M."/>
            <person name="Buhay C.J."/>
            <person name="Chen R."/>
            <person name="Cree A."/>
            <person name="Ding Y."/>
            <person name="Dugan-Rocha S."/>
            <person name="Gill R."/>
            <person name="Gunaratne P."/>
            <person name="Harris R.A."/>
            <person name="Hawes A.C."/>
            <person name="Hernandez J."/>
            <person name="Hodgson A.V."/>
            <person name="Hume J."/>
            <person name="Jackson A."/>
            <person name="Khan Z.M."/>
            <person name="Kovar-Smith C."/>
            <person name="Lewis L.R."/>
            <person name="Lozado R.J."/>
            <person name="Metzker M.L."/>
            <person name="Milosavljevic A."/>
            <person name="Miner G.R."/>
            <person name="Montgomery K.T."/>
            <person name="Morgan M.B."/>
            <person name="Nazareth L.V."/>
            <person name="Scott G."/>
            <person name="Sodergren E."/>
            <person name="Song X.-Z."/>
            <person name="Steffen D."/>
            <person name="Lovering R.C."/>
            <person name="Wheeler D.A."/>
            <person name="Worley K.C."/>
            <person name="Yuan Y."/>
            <person name="Zhang Z."/>
            <person name="Adams C.Q."/>
            <person name="Ansari-Lari M.A."/>
            <person name="Ayele M."/>
            <person name="Brown M.J."/>
            <person name="Chen G."/>
            <person name="Chen Z."/>
            <person name="Clerc-Blankenburg K.P."/>
            <person name="Davis C."/>
            <person name="Delgado O."/>
            <person name="Dinh H.H."/>
            <person name="Draper H."/>
            <person name="Gonzalez-Garay M.L."/>
            <person name="Havlak P."/>
            <person name="Jackson L.R."/>
            <person name="Jacob L.S."/>
            <person name="Kelly S.H."/>
            <person name="Li L."/>
            <person name="Li Z."/>
            <person name="Liu J."/>
            <person name="Liu W."/>
            <person name="Lu J."/>
            <person name="Maheshwari M."/>
            <person name="Nguyen B.-V."/>
            <person name="Okwuonu G.O."/>
            <person name="Pasternak S."/>
            <person name="Perez L.M."/>
            <person name="Plopper F.J.H."/>
            <person name="Santibanez J."/>
            <person name="Shen H."/>
            <person name="Tabor P.E."/>
            <person name="Verduzco D."/>
            <person name="Waldron L."/>
            <person name="Wang Q."/>
            <person name="Williams G.A."/>
            <person name="Zhang J."/>
            <person name="Zhou J."/>
            <person name="Allen C.C."/>
            <person name="Amin A.G."/>
            <person name="Anyalebechi V."/>
            <person name="Bailey M."/>
            <person name="Barbaria J.A."/>
            <person name="Bimage K.E."/>
            <person name="Bryant N.P."/>
            <person name="Burch P.E."/>
            <person name="Burkett C.E."/>
            <person name="Burrell K.L."/>
            <person name="Calderon E."/>
            <person name="Cardenas V."/>
            <person name="Carter K."/>
            <person name="Casias K."/>
            <person name="Cavazos I."/>
            <person name="Cavazos S.R."/>
            <person name="Ceasar H."/>
            <person name="Chacko J."/>
            <person name="Chan S.N."/>
            <person name="Chavez D."/>
            <person name="Christopoulos C."/>
            <person name="Chu J."/>
            <person name="Cockrell R."/>
            <person name="Cox C.D."/>
            <person name="Dang M."/>
            <person name="Dathorne S.R."/>
            <person name="David R."/>
            <person name="Davis C.M."/>
            <person name="Davy-Carroll L."/>
            <person name="Deshazo D.R."/>
            <person name="Donlin J.E."/>
            <person name="D'Souza L."/>
            <person name="Eaves K.A."/>
            <person name="Egan A."/>
            <person name="Emery-Cohen A.J."/>
            <person name="Escotto M."/>
            <person name="Flagg N."/>
            <person name="Forbes L.D."/>
            <person name="Gabisi A.M."/>
            <person name="Garza M."/>
            <person name="Hamilton C."/>
            <person name="Henderson N."/>
            <person name="Hernandez O."/>
            <person name="Hines S."/>
            <person name="Hogues M.E."/>
            <person name="Huang M."/>
            <person name="Idlebird D.G."/>
            <person name="Johnson R."/>
            <person name="Jolivet A."/>
            <person name="Jones S."/>
            <person name="Kagan R."/>
            <person name="King L.M."/>
            <person name="Leal B."/>
            <person name="Lebow H."/>
            <person name="Lee S."/>
            <person name="LeVan J.M."/>
            <person name="Lewis L.C."/>
            <person name="London P."/>
            <person name="Lorensuhewa L.M."/>
            <person name="Loulseged H."/>
            <person name="Lovett D.A."/>
            <person name="Lucier A."/>
            <person name="Lucier R.L."/>
            <person name="Ma J."/>
            <person name="Madu R.C."/>
            <person name="Mapua P."/>
            <person name="Martindale A.D."/>
            <person name="Martinez E."/>
            <person name="Massey E."/>
            <person name="Mawhiney S."/>
            <person name="Meador M.G."/>
            <person name="Mendez S."/>
            <person name="Mercado C."/>
            <person name="Mercado I.C."/>
            <person name="Merritt C.E."/>
            <person name="Miner Z.L."/>
            <person name="Minja E."/>
            <person name="Mitchell T."/>
            <person name="Mohabbat F."/>
            <person name="Mohabbat K."/>
            <person name="Montgomery B."/>
            <person name="Moore N."/>
            <person name="Morris S."/>
            <person name="Munidasa M."/>
            <person name="Ngo R.N."/>
            <person name="Nguyen N.B."/>
            <person name="Nickerson E."/>
            <person name="Nwaokelemeh O.O."/>
            <person name="Nwokenkwo S."/>
            <person name="Obregon M."/>
            <person name="Oguh M."/>
            <person name="Oragunye N."/>
            <person name="Oviedo R.J."/>
            <person name="Parish B.J."/>
            <person name="Parker D.N."/>
            <person name="Parrish J."/>
            <person name="Parks K.L."/>
            <person name="Paul H.A."/>
            <person name="Payton B.A."/>
            <person name="Perez A."/>
            <person name="Perrin W."/>
            <person name="Pickens A."/>
            <person name="Primus E.L."/>
            <person name="Pu L.-L."/>
            <person name="Puazo M."/>
            <person name="Quiles M.M."/>
            <person name="Quiroz J.B."/>
            <person name="Rabata D."/>
            <person name="Reeves K."/>
            <person name="Ruiz S.J."/>
            <person name="Shao H."/>
            <person name="Sisson I."/>
            <person name="Sonaike T."/>
            <person name="Sorelle R.P."/>
            <person name="Sutton A.E."/>
            <person name="Svatek A.F."/>
            <person name="Svetz L.A."/>
            <person name="Tamerisa K.S."/>
            <person name="Taylor T.R."/>
            <person name="Teague B."/>
            <person name="Thomas N."/>
            <person name="Thorn R.D."/>
            <person name="Trejos Z.Y."/>
            <person name="Trevino B.K."/>
            <person name="Ukegbu O.N."/>
            <person name="Urban J.B."/>
            <person name="Vasquez L.I."/>
            <person name="Vera V.A."/>
            <person name="Villasana D.M."/>
            <person name="Wang L."/>
            <person name="Ward-Moore S."/>
            <person name="Warren J.T."/>
            <person name="Wei X."/>
            <person name="White F."/>
            <person name="Williamson A.L."/>
            <person name="Wleczyk R."/>
            <person name="Wooden H.S."/>
            <person name="Wooden S.H."/>
            <person name="Yen J."/>
            <person name="Yoon L."/>
            <person name="Yoon V."/>
            <person name="Zorrilla S.E."/>
            <person name="Nelson D."/>
            <person name="Kucherlapati R."/>
            <person name="Weinstock G."/>
            <person name="Gibbs R.A."/>
        </authorList>
    </citation>
    <scope>NUCLEOTIDE SEQUENCE [LARGE SCALE GENOMIC DNA]</scope>
</reference>
<reference evidence="5" key="3">
    <citation type="journal article" date="2022" name="Mol. Cancer">
        <title>Micropeptide MIAC inhibits the tumor progression by interacting with AQP2 and inhibiting EREG/EGFR signaling in renal cell carcinoma.</title>
        <authorList>
            <person name="Li M."/>
            <person name="Liu G."/>
            <person name="Jin X."/>
            <person name="Guo H."/>
            <person name="Setrerrahmane S."/>
            <person name="Xu X."/>
            <person name="Li T."/>
            <person name="Lin Y."/>
            <person name="Xu H."/>
        </authorList>
    </citation>
    <scope>FUNCTION</scope>
    <scope>INTERACTION WITH AQP2</scope>
</reference>
<gene>
    <name evidence="7" type="primary">AQP5-AS1</name>
    <name evidence="4" type="synonym">MIAC</name>
</gene>
<proteinExistence type="evidence at protein level"/>
<protein>
    <recommendedName>
        <fullName evidence="4">Micropeptide inhibiting actin cytoskeleton</fullName>
    </recommendedName>
</protein>
<name>MIAC_HUMAN</name>
<accession>A0A7L8Y648</accession>
<comment type="function">
    <text evidence="2 3">Reduces filamentous actin fibers by interacting with aquaporin AQP2 which leads to inhibition of the expression of SEPTIN4 and integrin ITGB4 (PubMed:32176498). Also inhibits the activation of the EREG/EGFR signaling pathway through interaction with AQP2 (PubMed:36117171).</text>
</comment>
<comment type="subunit">
    <text evidence="2 3">Interacts with aquaporin AQP2.</text>
</comment>
<comment type="miscellaneous">
    <text evidence="2 3">Inhibits head and neck squamous cell carcinoma (HNSCC) progression in vitro (PubMed:32176498). Also inhibits renal cell carcinoma progression in vitro (PubMed:36117171).</text>
</comment>
<evidence type="ECO:0000256" key="1">
    <source>
        <dbReference type="SAM" id="MobiDB-lite"/>
    </source>
</evidence>
<evidence type="ECO:0000269" key="2">
    <source>
    </source>
</evidence>
<evidence type="ECO:0000269" key="3">
    <source>
    </source>
</evidence>
<evidence type="ECO:0000303" key="4">
    <source>
    </source>
</evidence>
<evidence type="ECO:0000305" key="5"/>
<evidence type="ECO:0000312" key="6">
    <source>
        <dbReference type="EMBL" id="QOI14795.1"/>
    </source>
</evidence>
<evidence type="ECO:0000312" key="7">
    <source>
        <dbReference type="HGNC" id="HGNC:55474"/>
    </source>
</evidence>